<accession>Q13794</accession>
<accession>B2R4T7</accession>
<accession>Q8N589</accession>
<reference key="1">
    <citation type="journal article" date="1990" name="J. Virol.">
        <title>Molecular cloning and characterization of a cDNA for a novel phorbol-12-myristate-13-acetate-responsive gene that is highly expressed in an adult T-cell leukemia cell line.</title>
        <authorList>
            <person name="Hijikata M."/>
            <person name="Kato N."/>
            <person name="Sato T."/>
            <person name="Kagami Y."/>
            <person name="Shimotohno K."/>
        </authorList>
    </citation>
    <scope>NUCLEOTIDE SEQUENCE [MRNA] (ISOFORM 1)</scope>
</reference>
<reference key="2">
    <citation type="journal article" date="2004" name="Nat. Genet.">
        <title>Complete sequencing and characterization of 21,243 full-length human cDNAs.</title>
        <authorList>
            <person name="Ota T."/>
            <person name="Suzuki Y."/>
            <person name="Nishikawa T."/>
            <person name="Otsuki T."/>
            <person name="Sugiyama T."/>
            <person name="Irie R."/>
            <person name="Wakamatsu A."/>
            <person name="Hayashi K."/>
            <person name="Sato H."/>
            <person name="Nagai K."/>
            <person name="Kimura K."/>
            <person name="Makita H."/>
            <person name="Sekine M."/>
            <person name="Obayashi M."/>
            <person name="Nishi T."/>
            <person name="Shibahara T."/>
            <person name="Tanaka T."/>
            <person name="Ishii S."/>
            <person name="Yamamoto J."/>
            <person name="Saito K."/>
            <person name="Kawai Y."/>
            <person name="Isono Y."/>
            <person name="Nakamura Y."/>
            <person name="Nagahari K."/>
            <person name="Murakami K."/>
            <person name="Yasuda T."/>
            <person name="Iwayanagi T."/>
            <person name="Wagatsuma M."/>
            <person name="Shiratori A."/>
            <person name="Sudo H."/>
            <person name="Hosoiri T."/>
            <person name="Kaku Y."/>
            <person name="Kodaira H."/>
            <person name="Kondo H."/>
            <person name="Sugawara M."/>
            <person name="Takahashi M."/>
            <person name="Kanda K."/>
            <person name="Yokoi T."/>
            <person name="Furuya T."/>
            <person name="Kikkawa E."/>
            <person name="Omura Y."/>
            <person name="Abe K."/>
            <person name="Kamihara K."/>
            <person name="Katsuta N."/>
            <person name="Sato K."/>
            <person name="Tanikawa M."/>
            <person name="Yamazaki M."/>
            <person name="Ninomiya K."/>
            <person name="Ishibashi T."/>
            <person name="Yamashita H."/>
            <person name="Murakawa K."/>
            <person name="Fujimori K."/>
            <person name="Tanai H."/>
            <person name="Kimata M."/>
            <person name="Watanabe M."/>
            <person name="Hiraoka S."/>
            <person name="Chiba Y."/>
            <person name="Ishida S."/>
            <person name="Ono Y."/>
            <person name="Takiguchi S."/>
            <person name="Watanabe S."/>
            <person name="Yosida M."/>
            <person name="Hotuta T."/>
            <person name="Kusano J."/>
            <person name="Kanehori K."/>
            <person name="Takahashi-Fujii A."/>
            <person name="Hara H."/>
            <person name="Tanase T.-O."/>
            <person name="Nomura Y."/>
            <person name="Togiya S."/>
            <person name="Komai F."/>
            <person name="Hara R."/>
            <person name="Takeuchi K."/>
            <person name="Arita M."/>
            <person name="Imose N."/>
            <person name="Musashino K."/>
            <person name="Yuuki H."/>
            <person name="Oshima A."/>
            <person name="Sasaki N."/>
            <person name="Aotsuka S."/>
            <person name="Yoshikawa Y."/>
            <person name="Matsunawa H."/>
            <person name="Ichihara T."/>
            <person name="Shiohata N."/>
            <person name="Sano S."/>
            <person name="Moriya S."/>
            <person name="Momiyama H."/>
            <person name="Satoh N."/>
            <person name="Takami S."/>
            <person name="Terashima Y."/>
            <person name="Suzuki O."/>
            <person name="Nakagawa S."/>
            <person name="Senoh A."/>
            <person name="Mizoguchi H."/>
            <person name="Goto Y."/>
            <person name="Shimizu F."/>
            <person name="Wakebe H."/>
            <person name="Hishigaki H."/>
            <person name="Watanabe T."/>
            <person name="Sugiyama A."/>
            <person name="Takemoto M."/>
            <person name="Kawakami B."/>
            <person name="Yamazaki M."/>
            <person name="Watanabe K."/>
            <person name="Kumagai A."/>
            <person name="Itakura S."/>
            <person name="Fukuzumi Y."/>
            <person name="Fujimori Y."/>
            <person name="Komiyama M."/>
            <person name="Tashiro H."/>
            <person name="Tanigami A."/>
            <person name="Fujiwara T."/>
            <person name="Ono T."/>
            <person name="Yamada K."/>
            <person name="Fujii Y."/>
            <person name="Ozaki K."/>
            <person name="Hirao M."/>
            <person name="Ohmori Y."/>
            <person name="Kawabata A."/>
            <person name="Hikiji T."/>
            <person name="Kobatake N."/>
            <person name="Inagaki H."/>
            <person name="Ikema Y."/>
            <person name="Okamoto S."/>
            <person name="Okitani R."/>
            <person name="Kawakami T."/>
            <person name="Noguchi S."/>
            <person name="Itoh T."/>
            <person name="Shigeta K."/>
            <person name="Senba T."/>
            <person name="Matsumura K."/>
            <person name="Nakajima Y."/>
            <person name="Mizuno T."/>
            <person name="Morinaga M."/>
            <person name="Sasaki M."/>
            <person name="Togashi T."/>
            <person name="Oyama M."/>
            <person name="Hata H."/>
            <person name="Watanabe M."/>
            <person name="Komatsu T."/>
            <person name="Mizushima-Sugano J."/>
            <person name="Satoh T."/>
            <person name="Shirai Y."/>
            <person name="Takahashi Y."/>
            <person name="Nakagawa K."/>
            <person name="Okumura K."/>
            <person name="Nagase T."/>
            <person name="Nomura N."/>
            <person name="Kikuchi H."/>
            <person name="Masuho Y."/>
            <person name="Yamashita R."/>
            <person name="Nakai K."/>
            <person name="Yada T."/>
            <person name="Nakamura Y."/>
            <person name="Ohara O."/>
            <person name="Isogai T."/>
            <person name="Sugano S."/>
        </authorList>
    </citation>
    <scope>NUCLEOTIDE SEQUENCE [LARGE SCALE MRNA] (ISOFORM 1)</scope>
</reference>
<reference key="3">
    <citation type="journal article" date="2005" name="Nature">
        <title>DNA sequence and analysis of human chromosome 18.</title>
        <authorList>
            <person name="Nusbaum C."/>
            <person name="Zody M.C."/>
            <person name="Borowsky M.L."/>
            <person name="Kamal M."/>
            <person name="Kodira C.D."/>
            <person name="Taylor T.D."/>
            <person name="Whittaker C.A."/>
            <person name="Chang J.L."/>
            <person name="Cuomo C.A."/>
            <person name="Dewar K."/>
            <person name="FitzGerald M.G."/>
            <person name="Yang X."/>
            <person name="Abouelleil A."/>
            <person name="Allen N.R."/>
            <person name="Anderson S."/>
            <person name="Bloom T."/>
            <person name="Bugalter B."/>
            <person name="Butler J."/>
            <person name="Cook A."/>
            <person name="DeCaprio D."/>
            <person name="Engels R."/>
            <person name="Garber M."/>
            <person name="Gnirke A."/>
            <person name="Hafez N."/>
            <person name="Hall J.L."/>
            <person name="Norman C.H."/>
            <person name="Itoh T."/>
            <person name="Jaffe D.B."/>
            <person name="Kuroki Y."/>
            <person name="Lehoczky J."/>
            <person name="Lui A."/>
            <person name="Macdonald P."/>
            <person name="Mauceli E."/>
            <person name="Mikkelsen T.S."/>
            <person name="Naylor J.W."/>
            <person name="Nicol R."/>
            <person name="Nguyen C."/>
            <person name="Noguchi H."/>
            <person name="O'Leary S.B."/>
            <person name="Piqani B."/>
            <person name="Smith C.L."/>
            <person name="Talamas J.A."/>
            <person name="Topham K."/>
            <person name="Totoki Y."/>
            <person name="Toyoda A."/>
            <person name="Wain H.M."/>
            <person name="Young S.K."/>
            <person name="Zeng Q."/>
            <person name="Zimmer A.R."/>
            <person name="Fujiyama A."/>
            <person name="Hattori M."/>
            <person name="Birren B.W."/>
            <person name="Sakaki Y."/>
            <person name="Lander E.S."/>
        </authorList>
    </citation>
    <scope>NUCLEOTIDE SEQUENCE [LARGE SCALE GENOMIC DNA]</scope>
</reference>
<reference key="4">
    <citation type="journal article" date="2004" name="Genome Res.">
        <title>The status, quality, and expansion of the NIH full-length cDNA project: the Mammalian Gene Collection (MGC).</title>
        <authorList>
            <consortium name="The MGC Project Team"/>
        </authorList>
    </citation>
    <scope>NUCLEOTIDE SEQUENCE [LARGE SCALE MRNA] (ISOFORMS 1 AND 2)</scope>
    <source>
        <tissue>Ovary</tissue>
        <tissue>Uterus</tissue>
    </source>
</reference>
<reference key="5">
    <citation type="journal article" date="2000" name="Science">
        <title>Noxa, a BH3-only member of the Bcl-2 family and candidate mediator of p53-induced apoptosis.</title>
        <authorList>
            <person name="Oda E."/>
            <person name="Ohki R."/>
            <person name="Murasawa H."/>
            <person name="Nemoto J."/>
            <person name="Shibue T."/>
            <person name="Yamashita T."/>
            <person name="Tokino T."/>
            <person name="Taniguchi T."/>
            <person name="Tanaka N."/>
        </authorList>
    </citation>
    <scope>FUNCTION</scope>
    <scope>INDUCTION</scope>
</reference>
<reference key="6">
    <citation type="journal article" date="2005" name="J. Biol. Chem.">
        <title>Involvement of Noxa in cellular apoptotic responses to interferon, double-stranded RNA, and virus infection.</title>
        <authorList>
            <person name="Sun Y."/>
            <person name="Leaman D.W."/>
        </authorList>
    </citation>
    <scope>FUNCTION</scope>
    <scope>INDUCTION</scope>
    <scope>SUBCELLULAR LOCATION</scope>
    <scope>INTERACTION WITH BAX</scope>
    <scope>MUTAGENESIS OF LEU-29</scope>
</reference>
<reference key="7">
    <citation type="journal article" date="2005" name="Mol. Cell">
        <title>Differential targeting of prosurvival Bcl-2 proteins by their BH3-only ligands allows complementary apoptotic function.</title>
        <authorList>
            <person name="Chen L."/>
            <person name="Willis S.N."/>
            <person name="Wei A."/>
            <person name="Smith B.J."/>
            <person name="Fletcher J.I."/>
            <person name="Hinds M.G."/>
            <person name="Colman P.M."/>
            <person name="Day C.L."/>
            <person name="Adams J.M."/>
            <person name="Huang D.C.S."/>
        </authorList>
    </citation>
    <scope>FUNCTION</scope>
    <scope>IDENTIFICATION BY MASS SPECTROMETRY</scope>
    <scope>MUTAGENESIS OF PHE-32 AND LYS-35</scope>
    <scope>INTERACTION WITH MCL1</scope>
</reference>
<reference key="8">
    <citation type="journal article" date="2007" name="J. Biol. Chem.">
        <title>Functional linkage between NOXA and Bim in mitochondrial apoptotic events.</title>
        <authorList>
            <person name="Han J."/>
            <person name="Goldstein L.A."/>
            <person name="Hou W."/>
            <person name="Rabinowich H."/>
        </authorList>
    </citation>
    <scope>FUNCTION</scope>
    <scope>INTERACTION WITH MCL1</scope>
    <scope>INDUCTION</scope>
    <scope>SUBCELLULAR LOCATION</scope>
</reference>
<reference key="9">
    <citation type="journal article" date="2007" name="Proc. Natl. Acad. Sci. U.S.A.">
        <title>Structural insights into the degradation of Mcl-1 induced by BH3 domains.</title>
        <authorList>
            <person name="Czabotar P.E."/>
            <person name="Lee E.F."/>
            <person name="van Delft M.F."/>
            <person name="Day C.L."/>
            <person name="Smith B.J."/>
            <person name="Huang D.C.S."/>
            <person name="Fairlie W.D."/>
            <person name="Hinds M.G."/>
            <person name="Colman P.M."/>
        </authorList>
    </citation>
    <scope>FUNCTION</scope>
    <scope>MUTAGENESIS OF LEU-29; PHE-32 AND LEU-36</scope>
    <scope>INTERACTION WITH MCL1</scope>
</reference>
<reference key="10">
    <citation type="journal article" date="2013" name="Oncogene">
        <title>Polyubiquitination and proteasomal turnover controls the anti-apoptotic activity of Bcl-B.</title>
        <authorList>
            <person name="van de Kooij B."/>
            <person name="Rooswinkel R.W."/>
            <person name="Kok F."/>
            <person name="Herrebout M."/>
            <person name="de Vries E."/>
            <person name="Paauwe M."/>
            <person name="Janssen G.M."/>
            <person name="van Veelen P.A."/>
            <person name="Borst J."/>
        </authorList>
    </citation>
    <scope>INTERACTION WITH BCL2L10</scope>
</reference>
<reference key="11">
    <citation type="submission" date="2010-07" db="PDB data bank">
        <title>Crystal structure of human BFL-1 in complex with NOXA BH3 peptide.</title>
        <authorList>
            <consortium name="Northeast structural genomics consortium (NESG)"/>
        </authorList>
    </citation>
    <scope>X-RAY CRYSTALLOGRAPHY (2.24 ANGSTROMS) OF 19-43 IN COMPLEX WITH BCL2A1</scope>
</reference>
<sequence>MPGKKARKNAQPSPARAPAELEVECATQLRRFGDKLNFRQKLLNLISKLFCSGT</sequence>
<organism>
    <name type="scientific">Homo sapiens</name>
    <name type="common">Human</name>
    <dbReference type="NCBI Taxonomy" id="9606"/>
    <lineage>
        <taxon>Eukaryota</taxon>
        <taxon>Metazoa</taxon>
        <taxon>Chordata</taxon>
        <taxon>Craniata</taxon>
        <taxon>Vertebrata</taxon>
        <taxon>Euteleostomi</taxon>
        <taxon>Mammalia</taxon>
        <taxon>Eutheria</taxon>
        <taxon>Euarchontoglires</taxon>
        <taxon>Primates</taxon>
        <taxon>Haplorrhini</taxon>
        <taxon>Catarrhini</taxon>
        <taxon>Hominidae</taxon>
        <taxon>Homo</taxon>
    </lineage>
</organism>
<feature type="chain" id="PRO_0000064644" description="Phorbol-12-myristate-13-acetate-induced protein 1">
    <location>
        <begin position="1"/>
        <end position="54"/>
    </location>
</feature>
<feature type="region of interest" description="Required for mitochondrial location">
    <location>
        <begin position="41"/>
        <end position="50"/>
    </location>
</feature>
<feature type="short sequence motif" description="BH3">
    <location>
        <begin position="29"/>
        <end position="37"/>
    </location>
</feature>
<feature type="splice variant" id="VSP_056247" description="In isoform 2." evidence="9">
    <original>ELEVECATQLRRFGDKLNFRQKLLNLISKLFCSGT</original>
    <variation>GPAGTAGTARDQAGFAIGMQLRFTRGKKLLSSSLSSSPLALPRGHEEQVQVAGSRVCYSTQEIWRQTELPAETSESDIQTLLLRNLTASKTCMRGLLQKSFLRRCTFHQFEERLHCN</variation>
    <location>
        <begin position="20"/>
        <end position="54"/>
    </location>
</feature>
<feature type="mutagenesis site" description="Reduced interaction with BAX." evidence="4 6">
    <original>L</original>
    <variation>A</variation>
    <location>
        <position position="29"/>
    </location>
</feature>
<feature type="mutagenesis site" description="Loss of interaction with MCL1 and of increased MCL1 degradation; when associated with E-32 and E-32." evidence="4 6">
    <original>L</original>
    <variation>E</variation>
    <location>
        <position position="29"/>
    </location>
</feature>
<feature type="mutagenesis site" description="Loss of interaction with MCL1 and of increased MCL1 degradation; when associated with E-29 and E-36." evidence="3 6">
    <original>F</original>
    <variation>E</variation>
    <location>
        <position position="32"/>
    </location>
</feature>
<feature type="mutagenesis site" description="Alters specificity of protein interaction and enhances pro-apoptotic activity; when associated with E-35." evidence="3 6">
    <original>F</original>
    <variation>I</variation>
    <location>
        <position position="32"/>
    </location>
</feature>
<feature type="mutagenesis site" description="Alters specificity of protein interaction and enhances pro-apoptotic activity; when associated with I-32." evidence="3">
    <original>K</original>
    <variation>E</variation>
    <location>
        <position position="35"/>
    </location>
</feature>
<feature type="mutagenesis site" description="Loss of interaction with MCL1 and of increased MCL1 degradation; when associated with E-29 and E-32." evidence="6">
    <original>L</original>
    <variation>E</variation>
    <location>
        <position position="36"/>
    </location>
</feature>
<feature type="helix" evidence="11">
    <location>
        <begin position="21"/>
        <end position="40"/>
    </location>
</feature>
<keyword id="KW-0002">3D-structure</keyword>
<keyword id="KW-0025">Alternative splicing</keyword>
<keyword id="KW-0053">Apoptosis</keyword>
<keyword id="KW-0496">Mitochondrion</keyword>
<keyword id="KW-1267">Proteomics identification</keyword>
<keyword id="KW-1185">Reference proteome</keyword>
<name>APR_HUMAN</name>
<comment type="function">
    <text evidence="1 2 3 4 5 6">Promotes activation of caspases and apoptosis. Promotes mitochondrial membrane changes and efflux of apoptogenic proteins from the mitochondria. Contributes to p53/TP53-dependent apoptosis after radiation exposure. Promotes proteasomal degradation of MCL1. Competes with BAK1 for binding to MCL1 and can displace BAK1 from its binding site on MCL1 (By similarity). Competes with BIM/BCL2L11 for binding to MCL1 and can displace BIM/BCL2L11 from its binding site on MCL1.</text>
</comment>
<comment type="subunit">
    <text evidence="3 4 5 6 7 8">Interacts with MCL1 (PubMed:15694340, PubMed:17374615, PubMed:17389404). Interacts with BCL2A1 (Ref.11). Interacts with BAX (PubMed:15705586). Interacts with BCL2L10 (PubMed:23563182).</text>
</comment>
<comment type="interaction">
    <interactant intactId="EBI-707392">
        <id>Q13794</id>
    </interactant>
    <interactant intactId="EBI-77694">
        <id>P10415</id>
        <label>BCL2</label>
    </interactant>
    <organismsDiffer>false</organismsDiffer>
    <experiments>3</experiments>
</comment>
<comment type="interaction">
    <interactant intactId="EBI-707392">
        <id>Q13794</id>
    </interactant>
    <interactant intactId="EBI-4370304">
        <id>P10415-1</id>
        <label>BCL2</label>
    </interactant>
    <organismsDiffer>false</organismsDiffer>
    <experiments>3</experiments>
</comment>
<comment type="interaction">
    <interactant intactId="EBI-707392">
        <id>Q13794</id>
    </interactant>
    <interactant intactId="EBI-1003422">
        <id>Q07820</id>
        <label>MCL1</label>
    </interactant>
    <organismsDiffer>false</organismsDiffer>
    <experiments>6</experiments>
</comment>
<comment type="interaction">
    <interactant intactId="EBI-12170575">
        <id>Q13794-2</id>
    </interactant>
    <interactant intactId="EBI-752037">
        <id>P61019</id>
        <label>RAB2A</label>
    </interactant>
    <organismsDiffer>false</organismsDiffer>
    <experiments>3</experiments>
</comment>
<comment type="subcellular location">
    <subcellularLocation>
        <location evidence="4 5">Mitochondrion</location>
    </subcellularLocation>
</comment>
<comment type="alternative products">
    <event type="alternative splicing"/>
    <isoform>
        <id>Q13794-1</id>
        <name>1</name>
        <sequence type="displayed"/>
    </isoform>
    <isoform>
        <id>Q13794-2</id>
        <name>2</name>
        <sequence type="described" ref="VSP_056247"/>
    </isoform>
</comment>
<comment type="tissue specificity">
    <text>Highly expressed in adult T-cell leukemia cell line.</text>
</comment>
<comment type="induction">
    <text evidence="2 4 5">Up-regulated by p53/TP53, phorbol esters, double-stranded RNA, IFNB1/IFN-beta and viruses.</text>
</comment>
<comment type="domain">
    <text>The BH3 motif is essential for pro-apoptotic activity.</text>
</comment>
<comment type="similarity">
    <text evidence="10">Belongs to the PMAIP1 family.</text>
</comment>
<gene>
    <name type="primary">PMAIP1</name>
    <name type="synonym">NOXA</name>
</gene>
<dbReference type="EMBL" id="D90070">
    <property type="protein sequence ID" value="BAA14111.1"/>
    <property type="molecule type" value="mRNA"/>
</dbReference>
<dbReference type="EMBL" id="AK311943">
    <property type="protein sequence ID" value="BAG34884.1"/>
    <property type="molecule type" value="mRNA"/>
</dbReference>
<dbReference type="EMBL" id="AC107990">
    <property type="status" value="NOT_ANNOTATED_CDS"/>
    <property type="molecule type" value="Genomic_DNA"/>
</dbReference>
<dbReference type="EMBL" id="BC013120">
    <property type="protein sequence ID" value="AAH13120.1"/>
    <property type="molecule type" value="mRNA"/>
</dbReference>
<dbReference type="EMBL" id="BC032663">
    <property type="protein sequence ID" value="AAH32663.1"/>
    <property type="molecule type" value="mRNA"/>
</dbReference>
<dbReference type="CCDS" id="CCDS11975.1">
    <molecule id="Q13794-1"/>
</dbReference>
<dbReference type="CCDS" id="CCDS92468.1">
    <molecule id="Q13794-2"/>
</dbReference>
<dbReference type="PIR" id="I37018">
    <property type="entry name" value="I37018"/>
</dbReference>
<dbReference type="RefSeq" id="NP_001369545.1">
    <molecule id="Q13794-2"/>
    <property type="nucleotide sequence ID" value="NM_001382616.1"/>
</dbReference>
<dbReference type="RefSeq" id="NP_066950.1">
    <molecule id="Q13794-1"/>
    <property type="nucleotide sequence ID" value="NM_021127.3"/>
</dbReference>
<dbReference type="PDB" id="3MQP">
    <property type="method" value="X-ray"/>
    <property type="resolution" value="2.24 A"/>
    <property type="chains" value="B=19-43"/>
</dbReference>
<dbReference type="PDBsum" id="3MQP"/>
<dbReference type="SMR" id="Q13794"/>
<dbReference type="BioGRID" id="111379">
    <property type="interactions" value="182"/>
</dbReference>
<dbReference type="ComplexPortal" id="CPX-304">
    <property type="entry name" value="MCL1-PMAIP1 complex"/>
</dbReference>
<dbReference type="FunCoup" id="Q13794">
    <property type="interactions" value="258"/>
</dbReference>
<dbReference type="IntAct" id="Q13794">
    <property type="interactions" value="12"/>
</dbReference>
<dbReference type="MINT" id="Q13794"/>
<dbReference type="STRING" id="9606.ENSP00000326119"/>
<dbReference type="BindingDB" id="Q13794"/>
<dbReference type="iPTMnet" id="Q13794"/>
<dbReference type="PhosphoSitePlus" id="Q13794"/>
<dbReference type="BioMuta" id="PMAIP1"/>
<dbReference type="jPOST" id="Q13794"/>
<dbReference type="MassIVE" id="Q13794"/>
<dbReference type="PaxDb" id="9606-ENSP00000326119"/>
<dbReference type="PeptideAtlas" id="Q13794"/>
<dbReference type="ProteomicsDB" id="59684">
    <molecule id="Q13794-1"/>
</dbReference>
<dbReference type="ProteomicsDB" id="72022"/>
<dbReference type="Pumba" id="Q13794"/>
<dbReference type="Antibodypedia" id="9901">
    <property type="antibodies" value="470 antibodies from 40 providers"/>
</dbReference>
<dbReference type="DNASU" id="5366"/>
<dbReference type="Ensembl" id="ENST00000269518.9">
    <molecule id="Q13794-2"/>
    <property type="protein sequence ID" value="ENSP00000269518.9"/>
    <property type="gene ID" value="ENSG00000141682.12"/>
</dbReference>
<dbReference type="Ensembl" id="ENST00000316660.7">
    <molecule id="Q13794-1"/>
    <property type="protein sequence ID" value="ENSP00000326119.7"/>
    <property type="gene ID" value="ENSG00000141682.12"/>
</dbReference>
<dbReference type="GeneID" id="5366"/>
<dbReference type="KEGG" id="hsa:5366"/>
<dbReference type="MANE-Select" id="ENST00000316660.7">
    <property type="protein sequence ID" value="ENSP00000326119.7"/>
    <property type="RefSeq nucleotide sequence ID" value="NM_021127.3"/>
    <property type="RefSeq protein sequence ID" value="NP_066950.1"/>
</dbReference>
<dbReference type="UCSC" id="uc002lic.3">
    <molecule id="Q13794-1"/>
    <property type="organism name" value="human"/>
</dbReference>
<dbReference type="AGR" id="HGNC:9108"/>
<dbReference type="CTD" id="5366"/>
<dbReference type="DisGeNET" id="5366"/>
<dbReference type="GeneCards" id="PMAIP1"/>
<dbReference type="HGNC" id="HGNC:9108">
    <property type="gene designation" value="PMAIP1"/>
</dbReference>
<dbReference type="HPA" id="ENSG00000141682">
    <property type="expression patterns" value="Tissue enhanced (bone)"/>
</dbReference>
<dbReference type="MIM" id="604959">
    <property type="type" value="gene"/>
</dbReference>
<dbReference type="neXtProt" id="NX_Q13794"/>
<dbReference type="OpenTargets" id="ENSG00000141682"/>
<dbReference type="PharmGKB" id="PA33434"/>
<dbReference type="VEuPathDB" id="HostDB:ENSG00000141682"/>
<dbReference type="eggNOG" id="ENOG502SEAE">
    <property type="taxonomic scope" value="Eukaryota"/>
</dbReference>
<dbReference type="GeneTree" id="ENSGT00530000065105"/>
<dbReference type="HOGENOM" id="CLU_3049644_0_0_1"/>
<dbReference type="InParanoid" id="Q13794"/>
<dbReference type="OMA" id="RIGDKWD"/>
<dbReference type="OrthoDB" id="10351553at2759"/>
<dbReference type="PAN-GO" id="Q13794">
    <property type="GO annotations" value="1 GO annotation based on evolutionary models"/>
</dbReference>
<dbReference type="PhylomeDB" id="Q13794"/>
<dbReference type="PathwayCommons" id="Q13794"/>
<dbReference type="Reactome" id="R-HSA-111448">
    <property type="pathway name" value="Activation of NOXA and translocation to mitochondria"/>
</dbReference>
<dbReference type="Reactome" id="R-HSA-111453">
    <property type="pathway name" value="BH3-only proteins associate with and inactivate anti-apoptotic BCL-2 members"/>
</dbReference>
<dbReference type="Reactome" id="R-HSA-6803204">
    <property type="pathway name" value="TP53 Regulates Transcription of Genes Involved in Cytochrome C Release"/>
</dbReference>
<dbReference type="SignaLink" id="Q13794"/>
<dbReference type="SIGNOR" id="Q13794"/>
<dbReference type="BioGRID-ORCS" id="5366">
    <property type="hits" value="32 hits in 1178 CRISPR screens"/>
</dbReference>
<dbReference type="EvolutionaryTrace" id="Q13794"/>
<dbReference type="GeneWiki" id="Phorbol-12-myristate-13-acetate-induced_protein_1"/>
<dbReference type="GenomeRNAi" id="5366"/>
<dbReference type="Pharos" id="Q13794">
    <property type="development level" value="Tbio"/>
</dbReference>
<dbReference type="PRO" id="PR:Q13794"/>
<dbReference type="Proteomes" id="UP000005640">
    <property type="component" value="Chromosome 18"/>
</dbReference>
<dbReference type="RNAct" id="Q13794">
    <property type="molecule type" value="protein"/>
</dbReference>
<dbReference type="Bgee" id="ENSG00000141682">
    <property type="expression patterns" value="Expressed in buccal mucosa cell and 173 other cell types or tissues"/>
</dbReference>
<dbReference type="ExpressionAtlas" id="Q13794">
    <property type="expression patterns" value="baseline and differential"/>
</dbReference>
<dbReference type="GO" id="GO:0097136">
    <property type="term" value="C:Bcl-2 family protein complex"/>
    <property type="evidence" value="ECO:0000353"/>
    <property type="project" value="ComplexPortal"/>
</dbReference>
<dbReference type="GO" id="GO:0005829">
    <property type="term" value="C:cytosol"/>
    <property type="evidence" value="ECO:0000314"/>
    <property type="project" value="UniProtKB"/>
</dbReference>
<dbReference type="GO" id="GO:0005741">
    <property type="term" value="C:mitochondrial outer membrane"/>
    <property type="evidence" value="ECO:0000304"/>
    <property type="project" value="Reactome"/>
</dbReference>
<dbReference type="GO" id="GO:0005739">
    <property type="term" value="C:mitochondrion"/>
    <property type="evidence" value="ECO:0000314"/>
    <property type="project" value="UniProtKB"/>
</dbReference>
<dbReference type="GO" id="GO:0005634">
    <property type="term" value="C:nucleus"/>
    <property type="evidence" value="ECO:0000314"/>
    <property type="project" value="UniProtKB"/>
</dbReference>
<dbReference type="GO" id="GO:0006915">
    <property type="term" value="P:apoptotic process"/>
    <property type="evidence" value="ECO:0000315"/>
    <property type="project" value="MGI"/>
</dbReference>
<dbReference type="GO" id="GO:0042149">
    <property type="term" value="P:cellular response to glucose starvation"/>
    <property type="evidence" value="ECO:0000315"/>
    <property type="project" value="UniProtKB"/>
</dbReference>
<dbReference type="GO" id="GO:0071456">
    <property type="term" value="P:cellular response to hypoxia"/>
    <property type="evidence" value="ECO:0000270"/>
    <property type="project" value="UniProtKB"/>
</dbReference>
<dbReference type="GO" id="GO:0051607">
    <property type="term" value="P:defense response to virus"/>
    <property type="evidence" value="ECO:0000314"/>
    <property type="project" value="BHF-UCL"/>
</dbReference>
<dbReference type="GO" id="GO:0006974">
    <property type="term" value="P:DNA damage response"/>
    <property type="evidence" value="ECO:0007669"/>
    <property type="project" value="InterPro"/>
</dbReference>
<dbReference type="GO" id="GO:0097193">
    <property type="term" value="P:intrinsic apoptotic signaling pathway"/>
    <property type="evidence" value="ECO:0000314"/>
    <property type="project" value="UniProtKB"/>
</dbReference>
<dbReference type="GO" id="GO:0072332">
    <property type="term" value="P:intrinsic apoptotic signaling pathway by p53 class mediator"/>
    <property type="evidence" value="ECO:0000315"/>
    <property type="project" value="UniProtKB"/>
</dbReference>
<dbReference type="GO" id="GO:0010917">
    <property type="term" value="P:negative regulation of mitochondrial membrane potential"/>
    <property type="evidence" value="ECO:0000250"/>
    <property type="project" value="UniProtKB"/>
</dbReference>
<dbReference type="GO" id="GO:0043065">
    <property type="term" value="P:positive regulation of apoptotic process"/>
    <property type="evidence" value="ECO:0000314"/>
    <property type="project" value="UniProtKB"/>
</dbReference>
<dbReference type="GO" id="GO:0043517">
    <property type="term" value="P:positive regulation of DNA damage response, signal transduction by p53 class mediator"/>
    <property type="evidence" value="ECO:0000315"/>
    <property type="project" value="UniProtKB"/>
</dbReference>
<dbReference type="GO" id="GO:1902237">
    <property type="term" value="P:positive regulation of endoplasmic reticulum stress-induced intrinsic apoptotic signaling pathway"/>
    <property type="evidence" value="ECO:0000304"/>
    <property type="project" value="ParkinsonsUK-UCL"/>
</dbReference>
<dbReference type="GO" id="GO:1902043">
    <property type="term" value="P:positive regulation of extrinsic apoptotic signaling pathway via death domain receptors"/>
    <property type="evidence" value="ECO:0000314"/>
    <property type="project" value="BHF-UCL"/>
</dbReference>
<dbReference type="GO" id="GO:0010907">
    <property type="term" value="P:positive regulation of glucose metabolic process"/>
    <property type="evidence" value="ECO:0000314"/>
    <property type="project" value="UniProtKB"/>
</dbReference>
<dbReference type="GO" id="GO:2001244">
    <property type="term" value="P:positive regulation of intrinsic apoptotic signaling pathway"/>
    <property type="evidence" value="ECO:0000314"/>
    <property type="project" value="UniProtKB"/>
</dbReference>
<dbReference type="GO" id="GO:0090200">
    <property type="term" value="P:positive regulation of release of cytochrome c from mitochondria"/>
    <property type="evidence" value="ECO:0000314"/>
    <property type="project" value="UniProtKB"/>
</dbReference>
<dbReference type="GO" id="GO:0010498">
    <property type="term" value="P:proteasomal protein catabolic process"/>
    <property type="evidence" value="ECO:0000314"/>
    <property type="project" value="UniProtKB"/>
</dbReference>
<dbReference type="GO" id="GO:0072593">
    <property type="term" value="P:reactive oxygen species metabolic process"/>
    <property type="evidence" value="ECO:0000314"/>
    <property type="project" value="UniProtKB"/>
</dbReference>
<dbReference type="GO" id="GO:0046902">
    <property type="term" value="P:regulation of mitochondrial membrane permeability"/>
    <property type="evidence" value="ECO:0000314"/>
    <property type="project" value="UniProtKB"/>
</dbReference>
<dbReference type="GO" id="GO:0001836">
    <property type="term" value="P:release of cytochrome c from mitochondria"/>
    <property type="evidence" value="ECO:0007669"/>
    <property type="project" value="InterPro"/>
</dbReference>
<dbReference type="GO" id="GO:0043331">
    <property type="term" value="P:response to dsRNA"/>
    <property type="evidence" value="ECO:0000314"/>
    <property type="project" value="HGNC-UCL"/>
</dbReference>
<dbReference type="GO" id="GO:0043029">
    <property type="term" value="P:T cell homeostasis"/>
    <property type="evidence" value="ECO:0000250"/>
    <property type="project" value="UniProtKB"/>
</dbReference>
<dbReference type="InterPro" id="IPR024140">
    <property type="entry name" value="Noxa"/>
</dbReference>
<dbReference type="PANTHER" id="PTHR14299">
    <property type="entry name" value="PHORBOL-12-MYRISTATE-13-ACETATE-INDUCED PROTEIN 1"/>
    <property type="match status" value="1"/>
</dbReference>
<dbReference type="PANTHER" id="PTHR14299:SF0">
    <property type="entry name" value="PHORBOL-12-MYRISTATE-13-ACETATE-INDUCED PROTEIN 1"/>
    <property type="match status" value="1"/>
</dbReference>
<dbReference type="Pfam" id="PF15150">
    <property type="entry name" value="PMAIP1"/>
    <property type="match status" value="1"/>
</dbReference>
<proteinExistence type="evidence at protein level"/>
<protein>
    <recommendedName>
        <fullName>Phorbol-12-myristate-13-acetate-induced protein 1</fullName>
        <shortName>PMA-induced protein 1</shortName>
    </recommendedName>
    <alternativeName>
        <fullName>Immediate-early-response protein APR</fullName>
    </alternativeName>
    <alternativeName>
        <fullName>Protein Noxa</fullName>
    </alternativeName>
</protein>
<evidence type="ECO:0000250" key="1"/>
<evidence type="ECO:0000269" key="2">
    <source>
    </source>
</evidence>
<evidence type="ECO:0000269" key="3">
    <source>
    </source>
</evidence>
<evidence type="ECO:0000269" key="4">
    <source>
    </source>
</evidence>
<evidence type="ECO:0000269" key="5">
    <source>
    </source>
</evidence>
<evidence type="ECO:0000269" key="6">
    <source>
    </source>
</evidence>
<evidence type="ECO:0000269" key="7">
    <source>
    </source>
</evidence>
<evidence type="ECO:0000269" key="8">
    <source ref="11"/>
</evidence>
<evidence type="ECO:0000303" key="9">
    <source>
    </source>
</evidence>
<evidence type="ECO:0000305" key="10"/>
<evidence type="ECO:0007829" key="11">
    <source>
        <dbReference type="PDB" id="3MQP"/>
    </source>
</evidence>